<comment type="function">
    <text evidence="1">This protein binds to the 23S rRNA, and is important in its secondary structure. It is located near the subunit interface in the base of the L7/L12 stalk, and near the tRNA binding site of the peptidyltransferase center.</text>
</comment>
<comment type="subunit">
    <text evidence="1">Part of the 50S ribosomal subunit.</text>
</comment>
<comment type="similarity">
    <text evidence="1">Belongs to the universal ribosomal protein uL6 family.</text>
</comment>
<reference key="1">
    <citation type="journal article" date="2006" name="Nat. Biotechnol.">
        <title>Complete genome sequence of the entomopathogenic and metabolically versatile soil bacterium Pseudomonas entomophila.</title>
        <authorList>
            <person name="Vodovar N."/>
            <person name="Vallenet D."/>
            <person name="Cruveiller S."/>
            <person name="Rouy Z."/>
            <person name="Barbe V."/>
            <person name="Acosta C."/>
            <person name="Cattolico L."/>
            <person name="Jubin C."/>
            <person name="Lajus A."/>
            <person name="Segurens B."/>
            <person name="Vacherie B."/>
            <person name="Wincker P."/>
            <person name="Weissenbach J."/>
            <person name="Lemaitre B."/>
            <person name="Medigue C."/>
            <person name="Boccard F."/>
        </authorList>
    </citation>
    <scope>NUCLEOTIDE SEQUENCE [LARGE SCALE GENOMIC DNA]</scope>
    <source>
        <strain>L48</strain>
    </source>
</reference>
<protein>
    <recommendedName>
        <fullName evidence="1">Large ribosomal subunit protein uL6</fullName>
    </recommendedName>
    <alternativeName>
        <fullName evidence="2">50S ribosomal protein L6</fullName>
    </alternativeName>
</protein>
<name>RL6_PSEE4</name>
<proteinExistence type="inferred from homology"/>
<accession>Q1IFV1</accession>
<dbReference type="EMBL" id="CT573326">
    <property type="protein sequence ID" value="CAK13451.1"/>
    <property type="molecule type" value="Genomic_DNA"/>
</dbReference>
<dbReference type="RefSeq" id="WP_011531892.1">
    <property type="nucleotide sequence ID" value="NC_008027.1"/>
</dbReference>
<dbReference type="SMR" id="Q1IFV1"/>
<dbReference type="STRING" id="384676.PSEEN0505"/>
<dbReference type="GeneID" id="32803839"/>
<dbReference type="KEGG" id="pen:PSEEN0505"/>
<dbReference type="eggNOG" id="COG0097">
    <property type="taxonomic scope" value="Bacteria"/>
</dbReference>
<dbReference type="HOGENOM" id="CLU_065464_1_2_6"/>
<dbReference type="OrthoDB" id="9805007at2"/>
<dbReference type="Proteomes" id="UP000000658">
    <property type="component" value="Chromosome"/>
</dbReference>
<dbReference type="GO" id="GO:0022625">
    <property type="term" value="C:cytosolic large ribosomal subunit"/>
    <property type="evidence" value="ECO:0007669"/>
    <property type="project" value="TreeGrafter"/>
</dbReference>
<dbReference type="GO" id="GO:0019843">
    <property type="term" value="F:rRNA binding"/>
    <property type="evidence" value="ECO:0007669"/>
    <property type="project" value="UniProtKB-UniRule"/>
</dbReference>
<dbReference type="GO" id="GO:0003735">
    <property type="term" value="F:structural constituent of ribosome"/>
    <property type="evidence" value="ECO:0007669"/>
    <property type="project" value="InterPro"/>
</dbReference>
<dbReference type="GO" id="GO:0002181">
    <property type="term" value="P:cytoplasmic translation"/>
    <property type="evidence" value="ECO:0007669"/>
    <property type="project" value="TreeGrafter"/>
</dbReference>
<dbReference type="FunFam" id="3.90.930.12:FF:000001">
    <property type="entry name" value="50S ribosomal protein L6"/>
    <property type="match status" value="1"/>
</dbReference>
<dbReference type="FunFam" id="3.90.930.12:FF:000002">
    <property type="entry name" value="50S ribosomal protein L6"/>
    <property type="match status" value="1"/>
</dbReference>
<dbReference type="Gene3D" id="3.90.930.12">
    <property type="entry name" value="Ribosomal protein L6, alpha-beta domain"/>
    <property type="match status" value="2"/>
</dbReference>
<dbReference type="HAMAP" id="MF_01365_B">
    <property type="entry name" value="Ribosomal_uL6_B"/>
    <property type="match status" value="1"/>
</dbReference>
<dbReference type="InterPro" id="IPR000702">
    <property type="entry name" value="Ribosomal_uL6-like"/>
</dbReference>
<dbReference type="InterPro" id="IPR036789">
    <property type="entry name" value="Ribosomal_uL6-like_a/b-dom_sf"/>
</dbReference>
<dbReference type="InterPro" id="IPR020040">
    <property type="entry name" value="Ribosomal_uL6_a/b-dom"/>
</dbReference>
<dbReference type="InterPro" id="IPR019906">
    <property type="entry name" value="Ribosomal_uL6_bac-type"/>
</dbReference>
<dbReference type="InterPro" id="IPR002358">
    <property type="entry name" value="Ribosomal_uL6_CS"/>
</dbReference>
<dbReference type="NCBIfam" id="TIGR03654">
    <property type="entry name" value="L6_bact"/>
    <property type="match status" value="1"/>
</dbReference>
<dbReference type="PANTHER" id="PTHR11655">
    <property type="entry name" value="60S/50S RIBOSOMAL PROTEIN L6/L9"/>
    <property type="match status" value="1"/>
</dbReference>
<dbReference type="PANTHER" id="PTHR11655:SF14">
    <property type="entry name" value="LARGE RIBOSOMAL SUBUNIT PROTEIN UL6M"/>
    <property type="match status" value="1"/>
</dbReference>
<dbReference type="Pfam" id="PF00347">
    <property type="entry name" value="Ribosomal_L6"/>
    <property type="match status" value="2"/>
</dbReference>
<dbReference type="PIRSF" id="PIRSF002162">
    <property type="entry name" value="Ribosomal_L6"/>
    <property type="match status" value="1"/>
</dbReference>
<dbReference type="PRINTS" id="PR00059">
    <property type="entry name" value="RIBOSOMALL6"/>
</dbReference>
<dbReference type="SUPFAM" id="SSF56053">
    <property type="entry name" value="Ribosomal protein L6"/>
    <property type="match status" value="2"/>
</dbReference>
<dbReference type="PROSITE" id="PS00525">
    <property type="entry name" value="RIBOSOMAL_L6_1"/>
    <property type="match status" value="1"/>
</dbReference>
<evidence type="ECO:0000255" key="1">
    <source>
        <dbReference type="HAMAP-Rule" id="MF_01365"/>
    </source>
</evidence>
<evidence type="ECO:0000305" key="2"/>
<organism>
    <name type="scientific">Pseudomonas entomophila (strain L48)</name>
    <dbReference type="NCBI Taxonomy" id="384676"/>
    <lineage>
        <taxon>Bacteria</taxon>
        <taxon>Pseudomonadati</taxon>
        <taxon>Pseudomonadota</taxon>
        <taxon>Gammaproteobacteria</taxon>
        <taxon>Pseudomonadales</taxon>
        <taxon>Pseudomonadaceae</taxon>
        <taxon>Pseudomonas</taxon>
    </lineage>
</organism>
<keyword id="KW-0687">Ribonucleoprotein</keyword>
<keyword id="KW-0689">Ribosomal protein</keyword>
<keyword id="KW-0694">RNA-binding</keyword>
<keyword id="KW-0699">rRNA-binding</keyword>
<feature type="chain" id="PRO_1000055287" description="Large ribosomal subunit protein uL6">
    <location>
        <begin position="1"/>
        <end position="177"/>
    </location>
</feature>
<gene>
    <name evidence="1" type="primary">rplF</name>
    <name type="ordered locus">PSEEN0505</name>
</gene>
<sequence>MSRVAKNPVKLPAGVEVKFAGQQLSVKGAKGTLELNVHSSVEVTEEAGELRFSARNGDQQARAMAGTTRALVNNMVQGVSQGFERKLQLVGVGYKAQAKGTVLNLALGFSHPVDYELPAGITAETPSQTDILIKGIDKQLVGQVAAEVRGFRPPEPYKGKGVRYADEVVRRKEAKKK</sequence>